<gene>
    <name evidence="1" type="primary">rtcA</name>
    <name type="ordered locus">LS215_0266</name>
</gene>
<sequence>MIEIDGSFGEGGGQILRTSLTLSVITGKPFRIFNIRANRPNPGLQRQHLWAVKAMKMISNAETKGDEVGSKELIFVPHEIKGNTNIDIDVGTAGSVTLIIQTVLPAIINKNVRIRIKGGTDVPKSPTIDYIRLVYLEILRKIGIEAKLNLIKRGHYPEGGGEVIIENVNGNPSAFSLLELGKLTIIKGISHVSSLPAHIAERQMNSAREILSKLGVPIEIETDVRQGEVSKGSGIALAAIGEKSIIGADSLGERGKRAEIVGEEAARILINNLNTKASVDIHMSDMLMIFASLYGGEYIGAELTSHAYTNMEIIKKFLDIKIDVSGKRPFRFKAKIF</sequence>
<reference key="1">
    <citation type="journal article" date="2009" name="Proc. Natl. Acad. Sci. U.S.A.">
        <title>Biogeography of the Sulfolobus islandicus pan-genome.</title>
        <authorList>
            <person name="Reno M.L."/>
            <person name="Held N.L."/>
            <person name="Fields C.J."/>
            <person name="Burke P.V."/>
            <person name="Whitaker R.J."/>
        </authorList>
    </citation>
    <scope>NUCLEOTIDE SEQUENCE [LARGE SCALE GENOMIC DNA]</scope>
    <source>
        <strain>L.S.2.15 / Lassen #1</strain>
    </source>
</reference>
<name>RTCA_SACI2</name>
<organism>
    <name type="scientific">Saccharolobus islandicus (strain L.S.2.15 / Lassen #1)</name>
    <name type="common">Sulfolobus islandicus</name>
    <dbReference type="NCBI Taxonomy" id="429572"/>
    <lineage>
        <taxon>Archaea</taxon>
        <taxon>Thermoproteota</taxon>
        <taxon>Thermoprotei</taxon>
        <taxon>Sulfolobales</taxon>
        <taxon>Sulfolobaceae</taxon>
        <taxon>Saccharolobus</taxon>
    </lineage>
</organism>
<dbReference type="EC" id="6.5.1.4" evidence="1"/>
<dbReference type="EMBL" id="CP001399">
    <property type="protein sequence ID" value="ACP34419.1"/>
    <property type="molecule type" value="Genomic_DNA"/>
</dbReference>
<dbReference type="RefSeq" id="WP_012712889.1">
    <property type="nucleotide sequence ID" value="NC_012589.1"/>
</dbReference>
<dbReference type="SMR" id="C3MKC1"/>
<dbReference type="GeneID" id="7806388"/>
<dbReference type="KEGG" id="sis:LS215_0266"/>
<dbReference type="HOGENOM" id="CLU_027882_0_0_2"/>
<dbReference type="OrthoDB" id="7994at2157"/>
<dbReference type="Proteomes" id="UP000001747">
    <property type="component" value="Chromosome"/>
</dbReference>
<dbReference type="GO" id="GO:0005737">
    <property type="term" value="C:cytoplasm"/>
    <property type="evidence" value="ECO:0007669"/>
    <property type="project" value="UniProtKB-SubCell"/>
</dbReference>
<dbReference type="GO" id="GO:0005524">
    <property type="term" value="F:ATP binding"/>
    <property type="evidence" value="ECO:0007669"/>
    <property type="project" value="UniProtKB-KW"/>
</dbReference>
<dbReference type="GO" id="GO:0003963">
    <property type="term" value="F:RNA-3'-phosphate cyclase activity"/>
    <property type="evidence" value="ECO:0007669"/>
    <property type="project" value="UniProtKB-UniRule"/>
</dbReference>
<dbReference type="GO" id="GO:0006396">
    <property type="term" value="P:RNA processing"/>
    <property type="evidence" value="ECO:0007669"/>
    <property type="project" value="InterPro"/>
</dbReference>
<dbReference type="CDD" id="cd00874">
    <property type="entry name" value="RNA_Cyclase_Class_II"/>
    <property type="match status" value="1"/>
</dbReference>
<dbReference type="FunFam" id="3.30.360.20:FF:000002">
    <property type="entry name" value="RNA terminal phosphate cyclase-like 1"/>
    <property type="match status" value="1"/>
</dbReference>
<dbReference type="Gene3D" id="3.65.10.20">
    <property type="entry name" value="RNA 3'-terminal phosphate cyclase domain"/>
    <property type="match status" value="1"/>
</dbReference>
<dbReference type="Gene3D" id="3.30.360.20">
    <property type="entry name" value="RNA 3'-terminal phosphate cyclase, insert domain"/>
    <property type="match status" value="1"/>
</dbReference>
<dbReference type="HAMAP" id="MF_00200">
    <property type="entry name" value="RTC"/>
    <property type="match status" value="1"/>
</dbReference>
<dbReference type="InterPro" id="IPR013791">
    <property type="entry name" value="RNA3'-term_phos_cycl_insert"/>
</dbReference>
<dbReference type="InterPro" id="IPR023797">
    <property type="entry name" value="RNA3'_phos_cyclase_dom"/>
</dbReference>
<dbReference type="InterPro" id="IPR037136">
    <property type="entry name" value="RNA3'_phos_cyclase_dom_sf"/>
</dbReference>
<dbReference type="InterPro" id="IPR000228">
    <property type="entry name" value="RNA3'_term_phos_cyc"/>
</dbReference>
<dbReference type="InterPro" id="IPR017770">
    <property type="entry name" value="RNA3'_term_phos_cyc_type_1"/>
</dbReference>
<dbReference type="InterPro" id="IPR020719">
    <property type="entry name" value="RNA3'_term_phos_cycl-like_CS"/>
</dbReference>
<dbReference type="InterPro" id="IPR013792">
    <property type="entry name" value="RNA3'P_cycl/enolpyr_Trfase_a/b"/>
</dbReference>
<dbReference type="InterPro" id="IPR036553">
    <property type="entry name" value="RPTC_insert"/>
</dbReference>
<dbReference type="NCBIfam" id="TIGR03399">
    <property type="entry name" value="RNA_3prim_cycl"/>
    <property type="match status" value="1"/>
</dbReference>
<dbReference type="PANTHER" id="PTHR11096">
    <property type="entry name" value="RNA 3' TERMINAL PHOSPHATE CYCLASE"/>
    <property type="match status" value="1"/>
</dbReference>
<dbReference type="PANTHER" id="PTHR11096:SF0">
    <property type="entry name" value="RNA 3'-TERMINAL PHOSPHATE CYCLASE"/>
    <property type="match status" value="1"/>
</dbReference>
<dbReference type="Pfam" id="PF01137">
    <property type="entry name" value="RTC"/>
    <property type="match status" value="1"/>
</dbReference>
<dbReference type="Pfam" id="PF05189">
    <property type="entry name" value="RTC_insert"/>
    <property type="match status" value="1"/>
</dbReference>
<dbReference type="PIRSF" id="PIRSF005378">
    <property type="entry name" value="RNA3'_term_phos_cycl_euk"/>
    <property type="match status" value="1"/>
</dbReference>
<dbReference type="SUPFAM" id="SSF55205">
    <property type="entry name" value="EPT/RTPC-like"/>
    <property type="match status" value="1"/>
</dbReference>
<dbReference type="PROSITE" id="PS01287">
    <property type="entry name" value="RTC"/>
    <property type="match status" value="1"/>
</dbReference>
<accession>C3MKC1</accession>
<proteinExistence type="inferred from homology"/>
<feature type="chain" id="PRO_1000204094" description="RNA 3'-terminal phosphate cyclase">
    <location>
        <begin position="1"/>
        <end position="337"/>
    </location>
</feature>
<feature type="active site" description="Tele-AMP-histidine intermediate" evidence="1">
    <location>
        <position position="306"/>
    </location>
</feature>
<feature type="binding site" evidence="1">
    <location>
        <position position="101"/>
    </location>
    <ligand>
        <name>ATP</name>
        <dbReference type="ChEBI" id="CHEBI:30616"/>
    </ligand>
</feature>
<feature type="binding site" evidence="1">
    <location>
        <begin position="282"/>
        <end position="285"/>
    </location>
    <ligand>
        <name>ATP</name>
        <dbReference type="ChEBI" id="CHEBI:30616"/>
    </ligand>
</feature>
<protein>
    <recommendedName>
        <fullName evidence="1">RNA 3'-terminal phosphate cyclase</fullName>
        <shortName evidence="1">RNA cyclase</shortName>
        <shortName evidence="1">RNA-3'-phosphate cyclase</shortName>
        <ecNumber evidence="1">6.5.1.4</ecNumber>
    </recommendedName>
</protein>
<evidence type="ECO:0000255" key="1">
    <source>
        <dbReference type="HAMAP-Rule" id="MF_00200"/>
    </source>
</evidence>
<keyword id="KW-0067">ATP-binding</keyword>
<keyword id="KW-0963">Cytoplasm</keyword>
<keyword id="KW-0436">Ligase</keyword>
<keyword id="KW-0547">Nucleotide-binding</keyword>
<comment type="function">
    <text evidence="1">Catalyzes the conversion of 3'-phosphate to a 2',3'-cyclic phosphodiester at the end of RNA. The mechanism of action of the enzyme occurs in 3 steps: (A) adenylation of the enzyme by ATP; (B) transfer of adenylate to an RNA-N3'P to produce RNA-N3'PP5'A; (C) and attack of the adjacent 2'-hydroxyl on the 3'-phosphorus in the diester linkage to produce the cyclic end product. The biological role of this enzyme is unknown but it is likely to function in some aspects of cellular RNA processing.</text>
</comment>
<comment type="catalytic activity">
    <reaction evidence="1">
        <text>a 3'-end 3'-phospho-ribonucleotide-RNA + ATP = a 3'-end 2',3'-cyclophospho-ribonucleotide-RNA + AMP + diphosphate</text>
        <dbReference type="Rhea" id="RHEA:23976"/>
        <dbReference type="Rhea" id="RHEA-COMP:10463"/>
        <dbReference type="Rhea" id="RHEA-COMP:10464"/>
        <dbReference type="ChEBI" id="CHEBI:30616"/>
        <dbReference type="ChEBI" id="CHEBI:33019"/>
        <dbReference type="ChEBI" id="CHEBI:83062"/>
        <dbReference type="ChEBI" id="CHEBI:83064"/>
        <dbReference type="ChEBI" id="CHEBI:456215"/>
        <dbReference type="EC" id="6.5.1.4"/>
    </reaction>
</comment>
<comment type="subcellular location">
    <subcellularLocation>
        <location evidence="1">Cytoplasm</location>
    </subcellularLocation>
</comment>
<comment type="similarity">
    <text evidence="1">Belongs to the RNA 3'-terminal cyclase family. Type 1 subfamily.</text>
</comment>